<dbReference type="EC" id="2.5.1.41" evidence="1"/>
<dbReference type="EMBL" id="CP001402">
    <property type="protein sequence ID" value="ACR42489.1"/>
    <property type="molecule type" value="Genomic_DNA"/>
</dbReference>
<dbReference type="RefSeq" id="WP_012711853.1">
    <property type="nucleotide sequence ID" value="NC_012726.1"/>
</dbReference>
<dbReference type="SMR" id="C4KIS5"/>
<dbReference type="GeneID" id="84062191"/>
<dbReference type="KEGG" id="sid:M164_1886"/>
<dbReference type="HOGENOM" id="CLU_068610_0_0_2"/>
<dbReference type="UniPathway" id="UPA00940"/>
<dbReference type="Proteomes" id="UP000001479">
    <property type="component" value="Chromosome"/>
</dbReference>
<dbReference type="GO" id="GO:0005737">
    <property type="term" value="C:cytoplasm"/>
    <property type="evidence" value="ECO:0007669"/>
    <property type="project" value="UniProtKB-SubCell"/>
</dbReference>
<dbReference type="GO" id="GO:0000287">
    <property type="term" value="F:magnesium ion binding"/>
    <property type="evidence" value="ECO:0007669"/>
    <property type="project" value="UniProtKB-UniRule"/>
</dbReference>
<dbReference type="GO" id="GO:0047294">
    <property type="term" value="F:phosphoglycerol geranylgeranyltransferase activity"/>
    <property type="evidence" value="ECO:0007669"/>
    <property type="project" value="UniProtKB-UniRule"/>
</dbReference>
<dbReference type="GO" id="GO:0046474">
    <property type="term" value="P:glycerophospholipid biosynthetic process"/>
    <property type="evidence" value="ECO:0007669"/>
    <property type="project" value="UniProtKB-UniRule"/>
</dbReference>
<dbReference type="CDD" id="cd02812">
    <property type="entry name" value="PcrB_like"/>
    <property type="match status" value="1"/>
</dbReference>
<dbReference type="FunFam" id="3.20.20.390:FF:000001">
    <property type="entry name" value="Heptaprenylglyceryl phosphate synthase"/>
    <property type="match status" value="1"/>
</dbReference>
<dbReference type="Gene3D" id="3.20.20.390">
    <property type="entry name" value="FMN-linked oxidoreductases"/>
    <property type="match status" value="1"/>
</dbReference>
<dbReference type="HAMAP" id="MF_00112">
    <property type="entry name" value="GGGP_HepGP_synthase"/>
    <property type="match status" value="1"/>
</dbReference>
<dbReference type="InterPro" id="IPR039074">
    <property type="entry name" value="GGGP/HepGP_synthase_I"/>
</dbReference>
<dbReference type="InterPro" id="IPR038597">
    <property type="entry name" value="GGGP/HepGP_synthase_sf"/>
</dbReference>
<dbReference type="InterPro" id="IPR008205">
    <property type="entry name" value="GGGP_HepGP_synthase"/>
</dbReference>
<dbReference type="InterPro" id="IPR010946">
    <property type="entry name" value="GGGP_synth"/>
</dbReference>
<dbReference type="NCBIfam" id="TIGR01769">
    <property type="entry name" value="GGGP"/>
    <property type="match status" value="1"/>
</dbReference>
<dbReference type="NCBIfam" id="TIGR01768">
    <property type="entry name" value="GGGP-family"/>
    <property type="match status" value="1"/>
</dbReference>
<dbReference type="NCBIfam" id="NF003198">
    <property type="entry name" value="PRK04169.1-2"/>
    <property type="match status" value="1"/>
</dbReference>
<dbReference type="NCBIfam" id="NF003202">
    <property type="entry name" value="PRK04169.1-6"/>
    <property type="match status" value="1"/>
</dbReference>
<dbReference type="PANTHER" id="PTHR40029">
    <property type="match status" value="1"/>
</dbReference>
<dbReference type="PANTHER" id="PTHR40029:SF2">
    <property type="entry name" value="HEPTAPRENYLGLYCERYL PHOSPHATE SYNTHASE"/>
    <property type="match status" value="1"/>
</dbReference>
<dbReference type="Pfam" id="PF01884">
    <property type="entry name" value="PcrB"/>
    <property type="match status" value="1"/>
</dbReference>
<dbReference type="SUPFAM" id="SSF51395">
    <property type="entry name" value="FMN-linked oxidoreductases"/>
    <property type="match status" value="1"/>
</dbReference>
<proteinExistence type="inferred from homology"/>
<reference key="1">
    <citation type="journal article" date="2009" name="Proc. Natl. Acad. Sci. U.S.A.">
        <title>Biogeography of the Sulfolobus islandicus pan-genome.</title>
        <authorList>
            <person name="Reno M.L."/>
            <person name="Held N.L."/>
            <person name="Fields C.J."/>
            <person name="Burke P.V."/>
            <person name="Whitaker R.J."/>
        </authorList>
    </citation>
    <scope>NUCLEOTIDE SEQUENCE [LARGE SCALE GENOMIC DNA]</scope>
    <source>
        <strain>M.16.4 / Kamchatka #3</strain>
    </source>
</reference>
<comment type="function">
    <text evidence="1">Prenyltransferase that catalyzes the transfer of the geranylgeranyl moiety of geranylgeranyl diphosphate (GGPP) to the C3 hydroxyl of sn-glycerol-1-phosphate (G1P). This reaction is the first ether-bond-formation step in the biosynthesis of archaeal membrane lipids.</text>
</comment>
<comment type="catalytic activity">
    <reaction evidence="1">
        <text>sn-glycerol 1-phosphate + (2E,6E,10E)-geranylgeranyl diphosphate = sn-3-O-(geranylgeranyl)glycerol 1-phosphate + diphosphate</text>
        <dbReference type="Rhea" id="RHEA:23404"/>
        <dbReference type="ChEBI" id="CHEBI:33019"/>
        <dbReference type="ChEBI" id="CHEBI:57677"/>
        <dbReference type="ChEBI" id="CHEBI:57685"/>
        <dbReference type="ChEBI" id="CHEBI:58756"/>
        <dbReference type="EC" id="2.5.1.41"/>
    </reaction>
</comment>
<comment type="cofactor">
    <cofactor evidence="1">
        <name>Mg(2+)</name>
        <dbReference type="ChEBI" id="CHEBI:18420"/>
    </cofactor>
</comment>
<comment type="pathway">
    <text evidence="1">Membrane lipid metabolism; glycerophospholipid metabolism.</text>
</comment>
<comment type="subcellular location">
    <subcellularLocation>
        <location evidence="1">Cytoplasm</location>
    </subcellularLocation>
</comment>
<comment type="similarity">
    <text evidence="1">Belongs to the GGGP/HepGP synthase family. Group II subfamily.</text>
</comment>
<feature type="chain" id="PRO_1000202942" description="Geranylgeranylglyceryl phosphate synthase">
    <location>
        <begin position="1"/>
        <end position="255"/>
    </location>
</feature>
<feature type="binding site" evidence="1">
    <location>
        <position position="34"/>
    </location>
    <ligand>
        <name>Mg(2+)</name>
        <dbReference type="ChEBI" id="CHEBI:18420"/>
    </ligand>
</feature>
<feature type="binding site" evidence="1">
    <location>
        <position position="64"/>
    </location>
    <ligand>
        <name>Mg(2+)</name>
        <dbReference type="ChEBI" id="CHEBI:18420"/>
    </ligand>
</feature>
<feature type="binding site" evidence="1">
    <location>
        <begin position="182"/>
        <end position="188"/>
    </location>
    <ligand>
        <name>sn-glycerol 1-phosphate</name>
        <dbReference type="ChEBI" id="CHEBI:57685"/>
    </ligand>
</feature>
<feature type="binding site" evidence="1">
    <location>
        <begin position="213"/>
        <end position="214"/>
    </location>
    <ligand>
        <name>sn-glycerol 1-phosphate</name>
        <dbReference type="ChEBI" id="CHEBI:57685"/>
    </ligand>
</feature>
<feature type="binding site" evidence="1">
    <location>
        <begin position="235"/>
        <end position="236"/>
    </location>
    <ligand>
        <name>sn-glycerol 1-phosphate</name>
        <dbReference type="ChEBI" id="CHEBI:57685"/>
    </ligand>
</feature>
<organism>
    <name type="scientific">Saccharolobus islandicus (strain M.16.4 / Kamchatka #3)</name>
    <name type="common">Sulfolobus islandicus</name>
    <dbReference type="NCBI Taxonomy" id="426118"/>
    <lineage>
        <taxon>Archaea</taxon>
        <taxon>Thermoproteota</taxon>
        <taxon>Thermoprotei</taxon>
        <taxon>Sulfolobales</taxon>
        <taxon>Sulfolobaceae</taxon>
        <taxon>Saccharolobus</taxon>
    </lineage>
</organism>
<evidence type="ECO:0000255" key="1">
    <source>
        <dbReference type="HAMAP-Rule" id="MF_00112"/>
    </source>
</evidence>
<protein>
    <recommendedName>
        <fullName evidence="1">Geranylgeranylglyceryl phosphate synthase</fullName>
        <shortName evidence="1">GGGP synthase</shortName>
        <shortName evidence="1">GGGPS</shortName>
        <ecNumber evidence="1">2.5.1.41</ecNumber>
    </recommendedName>
    <alternativeName>
        <fullName evidence="1">(S)-3-O-geranylgeranylglyceryl phosphate synthase</fullName>
    </alternativeName>
    <alternativeName>
        <fullName evidence="1">Phosphoglycerol geranylgeranyltransferase</fullName>
    </alternativeName>
</protein>
<accession>C4KIS5</accession>
<name>GGGPS_SACI6</name>
<sequence>MKIRKKKMKLKGKVKKYLMDKLNDNEKLHFSLLDPFKINSSEELKYIAKNLYNVGTDAFLIGGTLGVSKDKLDFVISLLDDYEIPKIIFPSNINLLSEKADALLFLSLLNSDDIYYVIGAQIVAAPIIKMLQIEVIPTAYVIVGHGGTAAHIGKARVIPYDNFELATAYTLAAEYLGMDFVYLEAGSGAPEPIRPEMISFIKKASSIPLIIGGGIRSVEVALKLVEAGANIIVTGNIIERDVDKAIKIIRGIKNK</sequence>
<keyword id="KW-0963">Cytoplasm</keyword>
<keyword id="KW-0444">Lipid biosynthesis</keyword>
<keyword id="KW-0443">Lipid metabolism</keyword>
<keyword id="KW-0460">Magnesium</keyword>
<keyword id="KW-0479">Metal-binding</keyword>
<keyword id="KW-0594">Phospholipid biosynthesis</keyword>
<keyword id="KW-1208">Phospholipid metabolism</keyword>
<keyword id="KW-0808">Transferase</keyword>
<gene>
    <name type="ordered locus">M164_1886</name>
</gene>